<comment type="function">
    <text evidence="1">Plays a role in the dissolution of the outermost membrane of extracellular enveloped virions (EV) to allow virion entry into host cells. Also participates in wrapping mature virions (MV) to form enveloped virions (EV).</text>
</comment>
<comment type="subunit">
    <text evidence="1">Interacts with OPG161; this interaction is required for efficient targeting of OPG161 and OPG190 into enveloped virions. Interacts with OPG162; this interaction is required for the correct glycosylation, trafficking and stability of OPG162 and OPG190 incorporation into extracellular enveloped virions. Interacts with envelope phospholipase OPG057.</text>
</comment>
<comment type="subcellular location">
    <subcellularLocation>
        <location evidence="1">Virion membrane</location>
        <topology evidence="1">Single-pass type I membrane protein</topology>
    </subcellularLocation>
    <subcellularLocation>
        <location evidence="1">Host Golgi apparatus</location>
        <location evidence="1">Host trans-Golgi network</location>
    </subcellularLocation>
    <text evidence="1">OPG190 is found on enveloped virion (EV) membranes.</text>
</comment>
<comment type="induction">
    <text>Expressed in the early phase of the viral replicative cycle.</text>
</comment>
<comment type="similarity">
    <text evidence="5">Belongs to the receptors of complement activation (RCA) family.</text>
</comment>
<accession>P0DTN2</accession>
<reference key="1">
    <citation type="journal article" date="2022" name="J. Infect. Dis.">
        <title>Exportation of Monkeypox virus from the African continent.</title>
        <authorList>
            <person name="Mauldin M.R."/>
            <person name="McCollum A.M."/>
            <person name="Nakazawa Y.J."/>
            <person name="Mandra A."/>
            <person name="Whitehouse E.R."/>
            <person name="Davidson W."/>
            <person name="Zhao H."/>
            <person name="Gao J."/>
            <person name="Li Y."/>
            <person name="Doty J."/>
            <person name="Yinka-Ogunleye A."/>
            <person name="Akinpelu A."/>
            <person name="Aruna O."/>
            <person name="Naidoo D."/>
            <person name="Lewandowski K."/>
            <person name="Afrough B."/>
            <person name="Graham V."/>
            <person name="Aarons E."/>
            <person name="Hewson R."/>
            <person name="Vipond R."/>
            <person name="Dunning J."/>
            <person name="Chand M."/>
            <person name="Brown C."/>
            <person name="Cohen-Gihon I."/>
            <person name="Erez N."/>
            <person name="Shifman O."/>
            <person name="Israeli O."/>
            <person name="Sharon M."/>
            <person name="Schwartz E."/>
            <person name="Beth-Din A."/>
            <person name="Zvi A."/>
            <person name="Mak T.M."/>
            <person name="Ng Y.K."/>
            <person name="Cui L."/>
            <person name="Lin R.T.P."/>
            <person name="Olson V.A."/>
            <person name="Brooks T."/>
            <person name="Paran N."/>
            <person name="Ihekweazu C."/>
            <person name="Reynolds M.G."/>
        </authorList>
    </citation>
    <scope>NUCLEOTIDE SEQUENCE [LARGE SCALE GENOMIC DNA]</scope>
    <source>
        <strain>MPXV-M5312_HM12_Rivers</strain>
    </source>
</reference>
<organism>
    <name type="scientific">Monkeypox virus</name>
    <dbReference type="NCBI Taxonomy" id="10244"/>
    <lineage>
        <taxon>Viruses</taxon>
        <taxon>Varidnaviria</taxon>
        <taxon>Bamfordvirae</taxon>
        <taxon>Nucleocytoviricota</taxon>
        <taxon>Pokkesviricetes</taxon>
        <taxon>Chitovirales</taxon>
        <taxon>Poxviridae</taxon>
        <taxon>Chordopoxvirinae</taxon>
        <taxon>Orthopoxvirus</taxon>
    </lineage>
</organism>
<proteinExistence type="evidence at protein level"/>
<protein>
    <recommendedName>
        <fullName>Protein OPG190</fullName>
    </recommendedName>
    <alternativeName>
        <fullName>Plaque-size/host range protein</fullName>
    </alternativeName>
</protein>
<evidence type="ECO:0000250" key="1">
    <source>
        <dbReference type="UniProtKB" id="Q01227"/>
    </source>
</evidence>
<evidence type="ECO:0000255" key="2"/>
<evidence type="ECO:0000255" key="3">
    <source>
        <dbReference type="PROSITE-ProRule" id="PRU00302"/>
    </source>
</evidence>
<evidence type="ECO:0000255" key="4">
    <source>
        <dbReference type="PROSITE-ProRule" id="PRU00498"/>
    </source>
</evidence>
<evidence type="ECO:0000305" key="5"/>
<evidence type="ECO:0007829" key="6">
    <source>
        <dbReference type="PDB" id="8XS3"/>
    </source>
</evidence>
<sequence length="317" mass="35146">MKTISVVTLLCVLPAVVYSTCTVPTMNNAKLTSTETSFNDKQKVTFTCDSGYHSLDPNAVCETDKWKYENPCKKMCTVSDYVSELYDKPLYEVNSTMTLSCNGETKYFRCEEKNGNTSWNDTVTCPNAECQPLQLEHGSCQPVKEKYSFGEYMTINCDVGYEVIGVSYISCTANSWNVIPSCQQKCDIPSLSNGLISGSTFSIGGVIHLSCKSGFTLTGSPSSTCIDGKWNPILPTCVRSNEEFDPVDDGPDDETDLSKLSKDVVQYEQEIESLEATYHIIIMALTIMGVIFLISIIVLVCSCDKNNDQYKFHKLLP</sequence>
<feature type="signal peptide" evidence="2">
    <location>
        <begin position="1"/>
        <end position="19"/>
    </location>
</feature>
<feature type="chain" id="PRO_0000457614" description="Protein OPG190" evidence="2">
    <location>
        <begin position="20"/>
        <end position="317"/>
    </location>
</feature>
<feature type="transmembrane region" description="Helical" evidence="2">
    <location>
        <begin position="280"/>
        <end position="300"/>
    </location>
</feature>
<feature type="domain" description="Sushi 1" evidence="3">
    <location>
        <begin position="20"/>
        <end position="74"/>
    </location>
</feature>
<feature type="domain" description="Sushi 2" evidence="3">
    <location>
        <begin position="123"/>
        <end position="183"/>
    </location>
</feature>
<feature type="domain" description="Sushi 3" evidence="3">
    <location>
        <begin position="184"/>
        <end position="239"/>
    </location>
</feature>
<feature type="glycosylation site" description="N-linked (GlcNAc...) asparagine; by host" evidence="4">
    <location>
        <position position="94"/>
    </location>
</feature>
<feature type="glycosylation site" description="N-linked (GlcNAc...) asparagine; by host" evidence="4">
    <location>
        <position position="116"/>
    </location>
</feature>
<feature type="glycosylation site" description="N-linked (GlcNAc...) asparagine; by host" evidence="4">
    <location>
        <position position="120"/>
    </location>
</feature>
<feature type="disulfide bond" evidence="3">
    <location>
        <begin position="21"/>
        <end position="61"/>
    </location>
</feature>
<feature type="disulfide bond" evidence="3">
    <location>
        <begin position="48"/>
        <end position="72"/>
    </location>
</feature>
<feature type="disulfide bond" evidence="3">
    <location>
        <begin position="125"/>
        <end position="171"/>
    </location>
</feature>
<feature type="disulfide bond" evidence="3">
    <location>
        <begin position="157"/>
        <end position="182"/>
    </location>
</feature>
<feature type="disulfide bond" evidence="3">
    <location>
        <begin position="186"/>
        <end position="225"/>
    </location>
</feature>
<feature type="disulfide bond" evidence="3">
    <location>
        <begin position="211"/>
        <end position="237"/>
    </location>
</feature>
<feature type="strand" evidence="6">
    <location>
        <begin position="41"/>
        <end position="45"/>
    </location>
</feature>
<feature type="strand" evidence="6">
    <location>
        <begin position="58"/>
        <end position="62"/>
    </location>
</feature>
<feature type="strand" evidence="6">
    <location>
        <begin position="65"/>
        <end position="70"/>
    </location>
</feature>
<feature type="helix" evidence="6">
    <location>
        <begin position="80"/>
        <end position="86"/>
    </location>
</feature>
<feature type="strand" evidence="6">
    <location>
        <begin position="96"/>
        <end position="99"/>
    </location>
</feature>
<feature type="helix" evidence="6">
    <location>
        <begin position="101"/>
        <end position="103"/>
    </location>
</feature>
<feature type="strand" evidence="6">
    <location>
        <begin position="106"/>
        <end position="109"/>
    </location>
</feature>
<feature type="strand" evidence="6">
    <location>
        <begin position="114"/>
        <end position="116"/>
    </location>
</feature>
<dbReference type="EMBL" id="MT903340">
    <property type="status" value="NOT_ANNOTATED_CDS"/>
    <property type="molecule type" value="Genomic_DNA"/>
</dbReference>
<dbReference type="RefSeq" id="NP_536594.1">
    <property type="nucleotide sequence ID" value="NC_003310.1"/>
</dbReference>
<dbReference type="RefSeq" id="YP_010377162.1">
    <property type="nucleotide sequence ID" value="NC_063383.1"/>
</dbReference>
<dbReference type="PDB" id="8XS3">
    <property type="method" value="EM"/>
    <property type="resolution" value="3.46 A"/>
    <property type="chains" value="C=19-278"/>
</dbReference>
<dbReference type="PDBsum" id="8XS3"/>
<dbReference type="EMDB" id="EMD-38613"/>
<dbReference type="SMR" id="P0DTN2"/>
<dbReference type="GeneID" id="72551576"/>
<dbReference type="GeneID" id="928902"/>
<dbReference type="Proteomes" id="UP000516359">
    <property type="component" value="Genome"/>
</dbReference>
<dbReference type="GO" id="GO:0044177">
    <property type="term" value="C:host cell Golgi apparatus"/>
    <property type="evidence" value="ECO:0007669"/>
    <property type="project" value="UniProtKB-SubCell"/>
</dbReference>
<dbReference type="GO" id="GO:0016020">
    <property type="term" value="C:membrane"/>
    <property type="evidence" value="ECO:0007669"/>
    <property type="project" value="UniProtKB-KW"/>
</dbReference>
<dbReference type="GO" id="GO:0055036">
    <property type="term" value="C:virion membrane"/>
    <property type="evidence" value="ECO:0007669"/>
    <property type="project" value="UniProtKB-SubCell"/>
</dbReference>
<dbReference type="GO" id="GO:0001848">
    <property type="term" value="F:complement binding"/>
    <property type="evidence" value="ECO:0007669"/>
    <property type="project" value="InterPro"/>
</dbReference>
<dbReference type="GO" id="GO:0045916">
    <property type="term" value="P:negative regulation of complement activation"/>
    <property type="evidence" value="ECO:0007669"/>
    <property type="project" value="InterPro"/>
</dbReference>
<dbReference type="CDD" id="cd00033">
    <property type="entry name" value="CCP"/>
    <property type="match status" value="2"/>
</dbReference>
<dbReference type="Gene3D" id="2.10.70.10">
    <property type="entry name" value="Complement Module, domain 1"/>
    <property type="match status" value="3"/>
</dbReference>
<dbReference type="InterPro" id="IPR011176">
    <property type="entry name" value="CCP_VACV_C3/B5"/>
</dbReference>
<dbReference type="InterPro" id="IPR051503">
    <property type="entry name" value="ComplSys_Reg/VirEntry_Med"/>
</dbReference>
<dbReference type="InterPro" id="IPR035976">
    <property type="entry name" value="Sushi/SCR/CCP_sf"/>
</dbReference>
<dbReference type="InterPro" id="IPR000436">
    <property type="entry name" value="Sushi_SCR_CCP_dom"/>
</dbReference>
<dbReference type="PANTHER" id="PTHR45785">
    <property type="entry name" value="COMPLEMENT FACTOR H-RELATED"/>
    <property type="match status" value="1"/>
</dbReference>
<dbReference type="PANTHER" id="PTHR45785:SF2">
    <property type="entry name" value="COMPLEMENT FACTOR H-RELATED"/>
    <property type="match status" value="1"/>
</dbReference>
<dbReference type="Pfam" id="PF00084">
    <property type="entry name" value="Sushi"/>
    <property type="match status" value="3"/>
</dbReference>
<dbReference type="PIRSF" id="PIRSF002486">
    <property type="entry name" value="CIP_VAC_C3L"/>
    <property type="match status" value="1"/>
</dbReference>
<dbReference type="SMART" id="SM00032">
    <property type="entry name" value="CCP"/>
    <property type="match status" value="3"/>
</dbReference>
<dbReference type="SUPFAM" id="SSF57535">
    <property type="entry name" value="Complement control module/SCR domain"/>
    <property type="match status" value="3"/>
</dbReference>
<dbReference type="PROSITE" id="PS50923">
    <property type="entry name" value="SUSHI"/>
    <property type="match status" value="3"/>
</dbReference>
<organismHost>
    <name type="scientific">Cynomys gunnisoni</name>
    <name type="common">Gunnison's prairie dog</name>
    <name type="synonym">Spermophilus gunnisoni</name>
    <dbReference type="NCBI Taxonomy" id="45479"/>
</organismHost>
<organismHost>
    <name type="scientific">Cynomys leucurus</name>
    <name type="common">White-tailed prairie dog</name>
    <dbReference type="NCBI Taxonomy" id="99825"/>
</organismHost>
<organismHost>
    <name type="scientific">Cynomys ludovicianus</name>
    <name type="common">Black-tailed prairie dog</name>
    <dbReference type="NCBI Taxonomy" id="45480"/>
</organismHost>
<organismHost>
    <name type="scientific">Cynomys mexicanus</name>
    <name type="common">Mexican prairie dog</name>
    <dbReference type="NCBI Taxonomy" id="99826"/>
</organismHost>
<organismHost>
    <name type="scientific">Cynomys parvidens</name>
    <name type="common">Utah prairie dog</name>
    <dbReference type="NCBI Taxonomy" id="99827"/>
</organismHost>
<organismHost>
    <name type="scientific">Gliridae</name>
    <name type="common">dormice</name>
    <dbReference type="NCBI Taxonomy" id="30650"/>
</organismHost>
<organismHost>
    <name type="scientific">Heliosciurus ruwenzorii</name>
    <name type="common">Ruwenzori sun squirrel</name>
    <dbReference type="NCBI Taxonomy" id="226685"/>
</organismHost>
<organismHost>
    <name type="scientific">Homo sapiens</name>
    <name type="common">Human</name>
    <dbReference type="NCBI Taxonomy" id="9606"/>
</organismHost>
<organismHost>
    <name type="scientific">Mus musculus</name>
    <name type="common">Mouse</name>
    <dbReference type="NCBI Taxonomy" id="10090"/>
</organismHost>
<gene>
    <name type="primary">OPG190</name>
    <name type="synonym">PS/HR</name>
    <name type="ORF">MPXVgp167</name>
</gene>
<keyword id="KW-0002">3D-structure</keyword>
<keyword id="KW-1015">Disulfide bond</keyword>
<keyword id="KW-0244">Early protein</keyword>
<keyword id="KW-0325">Glycoprotein</keyword>
<keyword id="KW-1040">Host Golgi apparatus</keyword>
<keyword id="KW-0472">Membrane</keyword>
<keyword id="KW-1185">Reference proteome</keyword>
<keyword id="KW-0732">Signal</keyword>
<keyword id="KW-0768">Sushi</keyword>
<keyword id="KW-0812">Transmembrane</keyword>
<keyword id="KW-1133">Transmembrane helix</keyword>
<keyword id="KW-0946">Virion</keyword>
<name>PG190_MONPV</name>